<accession>P33502</accession>
<dbReference type="EC" id="7.1.1.2"/>
<dbReference type="EMBL" id="L04272">
    <property type="protein sequence ID" value="AAA93552.1"/>
    <property type="molecule type" value="Genomic_DNA"/>
</dbReference>
<dbReference type="SMR" id="P33502"/>
<dbReference type="GO" id="GO:0005743">
    <property type="term" value="C:mitochondrial inner membrane"/>
    <property type="evidence" value="ECO:0007669"/>
    <property type="project" value="UniProtKB-SubCell"/>
</dbReference>
<dbReference type="GO" id="GO:0008137">
    <property type="term" value="F:NADH dehydrogenase (ubiquinone) activity"/>
    <property type="evidence" value="ECO:0007669"/>
    <property type="project" value="UniProtKB-EC"/>
</dbReference>
<dbReference type="GO" id="GO:0009060">
    <property type="term" value="P:aerobic respiration"/>
    <property type="evidence" value="ECO:0007669"/>
    <property type="project" value="TreeGrafter"/>
</dbReference>
<dbReference type="HAMAP" id="MF_01350">
    <property type="entry name" value="NDH1_NuoH"/>
    <property type="match status" value="1"/>
</dbReference>
<dbReference type="InterPro" id="IPR001694">
    <property type="entry name" value="NADH_UbQ_OxRdtase_su1/FPO"/>
</dbReference>
<dbReference type="InterPro" id="IPR018086">
    <property type="entry name" value="NADH_UbQ_OxRdtase_su1_CS"/>
</dbReference>
<dbReference type="PANTHER" id="PTHR11432">
    <property type="entry name" value="NADH DEHYDROGENASE SUBUNIT 1"/>
    <property type="match status" value="1"/>
</dbReference>
<dbReference type="PANTHER" id="PTHR11432:SF3">
    <property type="entry name" value="NADH-UBIQUINONE OXIDOREDUCTASE CHAIN 1"/>
    <property type="match status" value="1"/>
</dbReference>
<dbReference type="Pfam" id="PF00146">
    <property type="entry name" value="NADHdh"/>
    <property type="match status" value="1"/>
</dbReference>
<dbReference type="PROSITE" id="PS00667">
    <property type="entry name" value="COMPLEX1_ND1_1"/>
    <property type="match status" value="1"/>
</dbReference>
<dbReference type="PROSITE" id="PS00668">
    <property type="entry name" value="COMPLEX1_ND1_2"/>
    <property type="match status" value="1"/>
</dbReference>
<geneLocation type="mitochondrion"/>
<keyword id="KW-0249">Electron transport</keyword>
<keyword id="KW-0472">Membrane</keyword>
<keyword id="KW-0496">Mitochondrion</keyword>
<keyword id="KW-0999">Mitochondrion inner membrane</keyword>
<keyword id="KW-0520">NAD</keyword>
<keyword id="KW-0679">Respiratory chain</keyword>
<keyword id="KW-1278">Translocase</keyword>
<keyword id="KW-0812">Transmembrane</keyword>
<keyword id="KW-1133">Transmembrane helix</keyword>
<keyword id="KW-0813">Transport</keyword>
<keyword id="KW-0830">Ubiquinone</keyword>
<comment type="function">
    <text evidence="1">Core subunit of the mitochondrial membrane respiratory chain NADH dehydrogenase (Complex I) that is believed to belong to the minimal assembly required for catalysis. Complex I functions in the transfer of electrons from NADH to the respiratory chain. The immediate electron acceptor for the enzyme is believed to be ubiquinone (By similarity).</text>
</comment>
<comment type="catalytic activity">
    <reaction>
        <text>a ubiquinone + NADH + 5 H(+)(in) = a ubiquinol + NAD(+) + 4 H(+)(out)</text>
        <dbReference type="Rhea" id="RHEA:29091"/>
        <dbReference type="Rhea" id="RHEA-COMP:9565"/>
        <dbReference type="Rhea" id="RHEA-COMP:9566"/>
        <dbReference type="ChEBI" id="CHEBI:15378"/>
        <dbReference type="ChEBI" id="CHEBI:16389"/>
        <dbReference type="ChEBI" id="CHEBI:17976"/>
        <dbReference type="ChEBI" id="CHEBI:57540"/>
        <dbReference type="ChEBI" id="CHEBI:57945"/>
        <dbReference type="EC" id="7.1.1.2"/>
    </reaction>
</comment>
<comment type="subcellular location">
    <subcellularLocation>
        <location evidence="1">Mitochondrion inner membrane</location>
        <topology evidence="1">Multi-pass membrane protein</topology>
    </subcellularLocation>
</comment>
<comment type="similarity">
    <text evidence="3">Belongs to the complex I subunit 1 family.</text>
</comment>
<reference key="1">
    <citation type="journal article" date="1990" name="Arch. Insect Biochem. Physiol.">
        <title>Cloning of the mitochondrial genome of Anopheles quadrimaculatus.</title>
        <authorList>
            <person name="Cockburn A.F."/>
            <person name="Mitchell S.E."/>
            <person name="Seawright J.A."/>
        </authorList>
    </citation>
    <scope>NUCLEOTIDE SEQUENCE [GENOMIC DNA]</scope>
    <source>
        <strain>Orlando</strain>
    </source>
</reference>
<organism>
    <name type="scientific">Anopheles quadrimaculatus</name>
    <name type="common">Common malaria mosquito</name>
    <dbReference type="NCBI Taxonomy" id="7166"/>
    <lineage>
        <taxon>Eukaryota</taxon>
        <taxon>Metazoa</taxon>
        <taxon>Ecdysozoa</taxon>
        <taxon>Arthropoda</taxon>
        <taxon>Hexapoda</taxon>
        <taxon>Insecta</taxon>
        <taxon>Pterygota</taxon>
        <taxon>Neoptera</taxon>
        <taxon>Endopterygota</taxon>
        <taxon>Diptera</taxon>
        <taxon>Nematocera</taxon>
        <taxon>Culicoidea</taxon>
        <taxon>Culicidae</taxon>
        <taxon>Anophelinae</taxon>
        <taxon>Anopheles</taxon>
    </lineage>
</organism>
<sequence>MFDKIMPLIGSLLLVICVMVGVAFLTLLERKVLGYIQIRKGPNKVGFNGLLQPFSDAVKLFTKEQTYPLLSNYISYYFSPIFSLFLSLVIWMCIPYLIKLYSFNLGVLFFLCCTSLGVYTVMIAGWSSNSNYALLGGLRAVAQTISYEVSLALILLSFIFLIGNYNFLNFYSYQSYIWFIFFCFPLGLVWLASCLAETNRTPFDFAEGESELVSGFNVEYSSGGFALIFLAEYSSILFMSMLFVVIFLGSDIYSLMFFFKLTFISFVFIWVRGTLPRFRYDKLMYLAWKSFLPLSLNYLFFFVGLKIFFISLLF</sequence>
<name>NU1M_ANOQU</name>
<protein>
    <recommendedName>
        <fullName>NADH-ubiquinone oxidoreductase chain 1</fullName>
        <ecNumber>7.1.1.2</ecNumber>
    </recommendedName>
    <alternativeName>
        <fullName>NADH dehydrogenase subunit 1</fullName>
    </alternativeName>
</protein>
<evidence type="ECO:0000250" key="1"/>
<evidence type="ECO:0000255" key="2"/>
<evidence type="ECO:0000305" key="3"/>
<proteinExistence type="inferred from homology"/>
<gene>
    <name type="primary">ND1</name>
</gene>
<feature type="chain" id="PRO_0000117342" description="NADH-ubiquinone oxidoreductase chain 1">
    <location>
        <begin position="1"/>
        <end position="314"/>
    </location>
</feature>
<feature type="transmembrane region" description="Helical" evidence="2">
    <location>
        <begin position="5"/>
        <end position="25"/>
    </location>
</feature>
<feature type="transmembrane region" description="Helical" evidence="2">
    <location>
        <begin position="78"/>
        <end position="98"/>
    </location>
</feature>
<feature type="transmembrane region" description="Helical" evidence="2">
    <location>
        <begin position="105"/>
        <end position="125"/>
    </location>
</feature>
<feature type="transmembrane region" description="Helical" evidence="2">
    <location>
        <begin position="151"/>
        <end position="171"/>
    </location>
</feature>
<feature type="transmembrane region" description="Helical" evidence="2">
    <location>
        <begin position="176"/>
        <end position="196"/>
    </location>
</feature>
<feature type="transmembrane region" description="Helical" evidence="2">
    <location>
        <begin position="227"/>
        <end position="247"/>
    </location>
</feature>
<feature type="transmembrane region" description="Helical" evidence="2">
    <location>
        <begin position="251"/>
        <end position="271"/>
    </location>
</feature>
<feature type="transmembrane region" description="Helical" evidence="2">
    <location>
        <begin position="294"/>
        <end position="314"/>
    </location>
</feature>